<accession>A4TKW3</accession>
<comment type="function">
    <text evidence="1">Component of the SOS system and an inhibitor of cell division. Accumulation of SulA causes rapid cessation of cell division and the appearance of long, non-septate filaments. In the presence of GTP, binds a polymerization-competent form of FtsZ in a 1:1 ratio, thus inhibiting FtsZ polymerization and therefore preventing it from participating in the assembly of the Z ring. This mechanism prevents the premature segregation of damaged DNA to daughter cells during cell division.</text>
</comment>
<comment type="subunit">
    <text evidence="1">Interacts with FtsZ.</text>
</comment>
<comment type="induction">
    <text evidence="1">By DNA damage, as part of the SOS response.</text>
</comment>
<comment type="PTM">
    <text evidence="1">Is rapidly cleaved and degraded by the Lon protease once DNA damage is repaired.</text>
</comment>
<comment type="similarity">
    <text evidence="1">Belongs to the SulA family.</text>
</comment>
<keyword id="KW-0131">Cell cycle</keyword>
<keyword id="KW-0132">Cell division</keyword>
<keyword id="KW-0227">DNA damage</keyword>
<keyword id="KW-0717">Septation</keyword>
<keyword id="KW-0742">SOS response</keyword>
<protein>
    <recommendedName>
        <fullName evidence="1">Cell division inhibitor SulA</fullName>
    </recommendedName>
</protein>
<evidence type="ECO:0000255" key="1">
    <source>
        <dbReference type="HAMAP-Rule" id="MF_01179"/>
    </source>
</evidence>
<organism>
    <name type="scientific">Yersinia pestis (strain Pestoides F)</name>
    <dbReference type="NCBI Taxonomy" id="386656"/>
    <lineage>
        <taxon>Bacteria</taxon>
        <taxon>Pseudomonadati</taxon>
        <taxon>Pseudomonadota</taxon>
        <taxon>Gammaproteobacteria</taxon>
        <taxon>Enterobacterales</taxon>
        <taxon>Yersiniaceae</taxon>
        <taxon>Yersinia</taxon>
    </lineage>
</organism>
<proteinExistence type="inferred from homology"/>
<name>SULA_YERPP</name>
<feature type="chain" id="PRO_0000343981" description="Cell division inhibitor SulA">
    <location>
        <begin position="1"/>
        <end position="168"/>
    </location>
</feature>
<feature type="region of interest" description="FtsZ binding" evidence="1">
    <location>
        <begin position="106"/>
        <end position="112"/>
    </location>
</feature>
<feature type="region of interest" description="Lon protease binding" evidence="1">
    <location>
        <begin position="161"/>
        <end position="168"/>
    </location>
</feature>
<feature type="site" description="Essential for degradation by Lon protease" evidence="1">
    <location>
        <position position="168"/>
    </location>
</feature>
<dbReference type="EMBL" id="CP000668">
    <property type="protein sequence ID" value="ABP39925.1"/>
    <property type="molecule type" value="Genomic_DNA"/>
</dbReference>
<dbReference type="RefSeq" id="WP_002213065.1">
    <property type="nucleotide sequence ID" value="NZ_CP009715.1"/>
</dbReference>
<dbReference type="SMR" id="A4TKW3"/>
<dbReference type="GeneID" id="57977127"/>
<dbReference type="KEGG" id="ypp:YPDSF_1538"/>
<dbReference type="PATRIC" id="fig|386656.14.peg.2234"/>
<dbReference type="GO" id="GO:0000917">
    <property type="term" value="P:division septum assembly"/>
    <property type="evidence" value="ECO:0007669"/>
    <property type="project" value="UniProtKB-KW"/>
</dbReference>
<dbReference type="GO" id="GO:0006281">
    <property type="term" value="P:DNA repair"/>
    <property type="evidence" value="ECO:0007669"/>
    <property type="project" value="TreeGrafter"/>
</dbReference>
<dbReference type="GO" id="GO:0051782">
    <property type="term" value="P:negative regulation of cell division"/>
    <property type="evidence" value="ECO:0007669"/>
    <property type="project" value="UniProtKB-UniRule"/>
</dbReference>
<dbReference type="GO" id="GO:0009432">
    <property type="term" value="P:SOS response"/>
    <property type="evidence" value="ECO:0007669"/>
    <property type="project" value="UniProtKB-UniRule"/>
</dbReference>
<dbReference type="FunFam" id="3.40.50.300:FF:000417">
    <property type="entry name" value="Cell division inhibitor SulA"/>
    <property type="match status" value="1"/>
</dbReference>
<dbReference type="Gene3D" id="3.40.50.300">
    <property type="entry name" value="P-loop containing nucleotide triphosphate hydrolases"/>
    <property type="match status" value="1"/>
</dbReference>
<dbReference type="HAMAP" id="MF_01179">
    <property type="entry name" value="SulA"/>
    <property type="match status" value="1"/>
</dbReference>
<dbReference type="InterPro" id="IPR004596">
    <property type="entry name" value="Cell_div_suppressor_SulA"/>
</dbReference>
<dbReference type="InterPro" id="IPR027417">
    <property type="entry name" value="P-loop_NTPase"/>
</dbReference>
<dbReference type="InterPro" id="IPR050356">
    <property type="entry name" value="SulA_CellDiv_inhibitor"/>
</dbReference>
<dbReference type="InterPro" id="IPR047696">
    <property type="entry name" value="SulA_enterobact"/>
</dbReference>
<dbReference type="NCBIfam" id="NF007892">
    <property type="entry name" value="PRK10595.1"/>
    <property type="match status" value="1"/>
</dbReference>
<dbReference type="NCBIfam" id="TIGR00623">
    <property type="entry name" value="SOS_SulA_coli"/>
    <property type="match status" value="1"/>
</dbReference>
<dbReference type="PANTHER" id="PTHR35369">
    <property type="entry name" value="BLR3025 PROTEIN-RELATED"/>
    <property type="match status" value="1"/>
</dbReference>
<dbReference type="PANTHER" id="PTHR35369:SF4">
    <property type="entry name" value="CELL DIVISION INHIBITOR SULA"/>
    <property type="match status" value="1"/>
</dbReference>
<dbReference type="Pfam" id="PF03846">
    <property type="entry name" value="SulA"/>
    <property type="match status" value="1"/>
</dbReference>
<dbReference type="PIRSF" id="PIRSF003093">
    <property type="entry name" value="SulA"/>
    <property type="match status" value="1"/>
</dbReference>
<dbReference type="SUPFAM" id="SSF52540">
    <property type="entry name" value="P-loop containing nucleoside triphosphate hydrolases"/>
    <property type="match status" value="1"/>
</dbReference>
<reference key="1">
    <citation type="submission" date="2007-02" db="EMBL/GenBank/DDBJ databases">
        <title>Complete sequence of chromosome of Yersinia pestis Pestoides F.</title>
        <authorList>
            <consortium name="US DOE Joint Genome Institute"/>
            <person name="Copeland A."/>
            <person name="Lucas S."/>
            <person name="Lapidus A."/>
            <person name="Barry K."/>
            <person name="Detter J.C."/>
            <person name="Glavina del Rio T."/>
            <person name="Hammon N."/>
            <person name="Israni S."/>
            <person name="Dalin E."/>
            <person name="Tice H."/>
            <person name="Pitluck S."/>
            <person name="Di Bartolo G."/>
            <person name="Chain P."/>
            <person name="Malfatti S."/>
            <person name="Shin M."/>
            <person name="Vergez L."/>
            <person name="Schmutz J."/>
            <person name="Larimer F."/>
            <person name="Land M."/>
            <person name="Hauser L."/>
            <person name="Worsham P."/>
            <person name="Chu M."/>
            <person name="Bearden S."/>
            <person name="Garcia E."/>
            <person name="Richardson P."/>
        </authorList>
    </citation>
    <scope>NUCLEOTIDE SEQUENCE [LARGE SCALE GENOMIC DNA]</scope>
    <source>
        <strain>Pestoides F</strain>
    </source>
</reference>
<sequence length="168" mass="19060">MRTQSLKPYHANYHSLTTNDSPTRVDAPTDSGLISEFVYSENQPVVTQLLLPLLQQLSKQSRWLLWLTPQQKLSRSWLKQSGLPINKVVQLRQINPLSTVEAMEKALLTGNYSVVLGWLPELTEDDRIRLRLAAKLGNAYGFVMRPLNDTKVGSGQCATLKIHSYLYH</sequence>
<gene>
    <name evidence="1" type="primary">sulA</name>
    <name type="ordered locus">YPDSF_1538</name>
</gene>